<feature type="chain" id="PRO_0000328539" description="tRNA (adenine(58)-N(1))-methyltransferase non-catalytic subunit trm6">
    <location>
        <begin position="1"/>
        <end position="521"/>
    </location>
</feature>
<feature type="region of interest" description="Disordered" evidence="3">
    <location>
        <begin position="1"/>
        <end position="24"/>
    </location>
</feature>
<feature type="region of interest" description="Disordered" evidence="3">
    <location>
        <begin position="305"/>
        <end position="336"/>
    </location>
</feature>
<feature type="region of interest" description="Disordered" evidence="3">
    <location>
        <begin position="452"/>
        <end position="521"/>
    </location>
</feature>
<feature type="compositionally biased region" description="Low complexity" evidence="3">
    <location>
        <begin position="12"/>
        <end position="24"/>
    </location>
</feature>
<feature type="compositionally biased region" description="Basic and acidic residues" evidence="3">
    <location>
        <begin position="308"/>
        <end position="334"/>
    </location>
</feature>
<feature type="compositionally biased region" description="Low complexity" evidence="3">
    <location>
        <begin position="452"/>
        <end position="476"/>
    </location>
</feature>
<feature type="compositionally biased region" description="Low complexity" evidence="3">
    <location>
        <begin position="487"/>
        <end position="502"/>
    </location>
</feature>
<feature type="compositionally biased region" description="Basic and acidic residues" evidence="3">
    <location>
        <begin position="510"/>
        <end position="521"/>
    </location>
</feature>
<accession>Q54UB1</accession>
<dbReference type="EMBL" id="AAFI02000040">
    <property type="protein sequence ID" value="EAL66884.1"/>
    <property type="molecule type" value="Genomic_DNA"/>
</dbReference>
<dbReference type="RefSeq" id="XP_640865.1">
    <property type="nucleotide sequence ID" value="XM_635773.1"/>
</dbReference>
<dbReference type="SMR" id="Q54UB1"/>
<dbReference type="FunCoup" id="Q54UB1">
    <property type="interactions" value="537"/>
</dbReference>
<dbReference type="STRING" id="44689.Q54UB1"/>
<dbReference type="PaxDb" id="44689-DDB0238374"/>
<dbReference type="EnsemblProtists" id="EAL66884">
    <property type="protein sequence ID" value="EAL66884"/>
    <property type="gene ID" value="DDB_G0281175"/>
</dbReference>
<dbReference type="GeneID" id="8622921"/>
<dbReference type="KEGG" id="ddi:DDB_G0281175"/>
<dbReference type="dictyBase" id="DDB_G0281175">
    <property type="gene designation" value="trmt6"/>
</dbReference>
<dbReference type="VEuPathDB" id="AmoebaDB:DDB_G0281175"/>
<dbReference type="eggNOG" id="KOG1416">
    <property type="taxonomic scope" value="Eukaryota"/>
</dbReference>
<dbReference type="HOGENOM" id="CLU_010916_0_3_1"/>
<dbReference type="InParanoid" id="Q54UB1"/>
<dbReference type="OMA" id="TRCRPYQ"/>
<dbReference type="PhylomeDB" id="Q54UB1"/>
<dbReference type="PRO" id="PR:Q54UB1"/>
<dbReference type="Proteomes" id="UP000002195">
    <property type="component" value="Chromosome 3"/>
</dbReference>
<dbReference type="GO" id="GO:0005634">
    <property type="term" value="C:nucleus"/>
    <property type="evidence" value="ECO:0000250"/>
    <property type="project" value="dictyBase"/>
</dbReference>
<dbReference type="GO" id="GO:0031515">
    <property type="term" value="C:tRNA (m1A) methyltransferase complex"/>
    <property type="evidence" value="ECO:0000250"/>
    <property type="project" value="dictyBase"/>
</dbReference>
<dbReference type="GO" id="GO:0030488">
    <property type="term" value="P:tRNA methylation"/>
    <property type="evidence" value="ECO:0007669"/>
    <property type="project" value="InterPro"/>
</dbReference>
<dbReference type="InterPro" id="IPR017423">
    <property type="entry name" value="TRM6"/>
</dbReference>
<dbReference type="PANTHER" id="PTHR12945">
    <property type="entry name" value="TRANSLATION INITIATION FACTOR EIF3-RELATED"/>
    <property type="match status" value="1"/>
</dbReference>
<dbReference type="PANTHER" id="PTHR12945:SF0">
    <property type="entry name" value="TRNA (ADENINE(58)-N(1))-METHYLTRANSFERASE NON-CATALYTIC SUBUNIT TRM6"/>
    <property type="match status" value="1"/>
</dbReference>
<dbReference type="Pfam" id="PF04189">
    <property type="entry name" value="Gcd10p"/>
    <property type="match status" value="1"/>
</dbReference>
<evidence type="ECO:0000250" key="1">
    <source>
        <dbReference type="UniProtKB" id="P41814"/>
    </source>
</evidence>
<evidence type="ECO:0000250" key="2">
    <source>
        <dbReference type="UniProtKB" id="Q9UJA5"/>
    </source>
</evidence>
<evidence type="ECO:0000256" key="3">
    <source>
        <dbReference type="SAM" id="MobiDB-lite"/>
    </source>
</evidence>
<evidence type="ECO:0000305" key="4"/>
<keyword id="KW-0539">Nucleus</keyword>
<keyword id="KW-1185">Reference proteome</keyword>
<keyword id="KW-0819">tRNA processing</keyword>
<gene>
    <name type="primary">trmt6</name>
    <name type="ORF">DDB_G0281175</name>
</gene>
<organism>
    <name type="scientific">Dictyostelium discoideum</name>
    <name type="common">Social amoeba</name>
    <dbReference type="NCBI Taxonomy" id="44689"/>
    <lineage>
        <taxon>Eukaryota</taxon>
        <taxon>Amoebozoa</taxon>
        <taxon>Evosea</taxon>
        <taxon>Eumycetozoa</taxon>
        <taxon>Dictyostelia</taxon>
        <taxon>Dictyosteliales</taxon>
        <taxon>Dictyosteliaceae</taxon>
        <taxon>Dictyostelium</taxon>
    </lineage>
</organism>
<name>TRM6_DICDI</name>
<proteinExistence type="inferred from homology"/>
<protein>
    <recommendedName>
        <fullName>tRNA (adenine(58)-N(1))-methyltransferase non-catalytic subunit trm6</fullName>
    </recommendedName>
    <alternativeName>
        <fullName>tRNA(m1A58)-methyltransferase subunit trm6</fullName>
        <shortName>tRNA(m1A58)MTase subunit trm6</shortName>
    </alternativeName>
</protein>
<comment type="function">
    <text evidence="1">Substrate-binding subunit of tRNA (adenine-N(1)-)-methyltransferase, which catalyzes the formation of N(1)-methyladenine at position 58 (m1A58) in initiator methionyl-tRNA.</text>
</comment>
<comment type="subunit">
    <text evidence="2">Heterotetramer; composed of two copies of trmt6 and two copies of trmt61a.</text>
</comment>
<comment type="subcellular location">
    <subcellularLocation>
        <location evidence="1">Nucleus</location>
    </subcellularLocation>
</comment>
<comment type="similarity">
    <text evidence="4">Belongs to the TRM6/GCD10 family.</text>
</comment>
<reference key="1">
    <citation type="journal article" date="2005" name="Nature">
        <title>The genome of the social amoeba Dictyostelium discoideum.</title>
        <authorList>
            <person name="Eichinger L."/>
            <person name="Pachebat J.A."/>
            <person name="Gloeckner G."/>
            <person name="Rajandream M.A."/>
            <person name="Sucgang R."/>
            <person name="Berriman M."/>
            <person name="Song J."/>
            <person name="Olsen R."/>
            <person name="Szafranski K."/>
            <person name="Xu Q."/>
            <person name="Tunggal B."/>
            <person name="Kummerfeld S."/>
            <person name="Madera M."/>
            <person name="Konfortov B.A."/>
            <person name="Rivero F."/>
            <person name="Bankier A.T."/>
            <person name="Lehmann R."/>
            <person name="Hamlin N."/>
            <person name="Davies R."/>
            <person name="Gaudet P."/>
            <person name="Fey P."/>
            <person name="Pilcher K."/>
            <person name="Chen G."/>
            <person name="Saunders D."/>
            <person name="Sodergren E.J."/>
            <person name="Davis P."/>
            <person name="Kerhornou A."/>
            <person name="Nie X."/>
            <person name="Hall N."/>
            <person name="Anjard C."/>
            <person name="Hemphill L."/>
            <person name="Bason N."/>
            <person name="Farbrother P."/>
            <person name="Desany B."/>
            <person name="Just E."/>
            <person name="Morio T."/>
            <person name="Rost R."/>
            <person name="Churcher C.M."/>
            <person name="Cooper J."/>
            <person name="Haydock S."/>
            <person name="van Driessche N."/>
            <person name="Cronin A."/>
            <person name="Goodhead I."/>
            <person name="Muzny D.M."/>
            <person name="Mourier T."/>
            <person name="Pain A."/>
            <person name="Lu M."/>
            <person name="Harper D."/>
            <person name="Lindsay R."/>
            <person name="Hauser H."/>
            <person name="James K.D."/>
            <person name="Quiles M."/>
            <person name="Madan Babu M."/>
            <person name="Saito T."/>
            <person name="Buchrieser C."/>
            <person name="Wardroper A."/>
            <person name="Felder M."/>
            <person name="Thangavelu M."/>
            <person name="Johnson D."/>
            <person name="Knights A."/>
            <person name="Loulseged H."/>
            <person name="Mungall K.L."/>
            <person name="Oliver K."/>
            <person name="Price C."/>
            <person name="Quail M.A."/>
            <person name="Urushihara H."/>
            <person name="Hernandez J."/>
            <person name="Rabbinowitsch E."/>
            <person name="Steffen D."/>
            <person name="Sanders M."/>
            <person name="Ma J."/>
            <person name="Kohara Y."/>
            <person name="Sharp S."/>
            <person name="Simmonds M.N."/>
            <person name="Spiegler S."/>
            <person name="Tivey A."/>
            <person name="Sugano S."/>
            <person name="White B."/>
            <person name="Walker D."/>
            <person name="Woodward J.R."/>
            <person name="Winckler T."/>
            <person name="Tanaka Y."/>
            <person name="Shaulsky G."/>
            <person name="Schleicher M."/>
            <person name="Weinstock G.M."/>
            <person name="Rosenthal A."/>
            <person name="Cox E.C."/>
            <person name="Chisholm R.L."/>
            <person name="Gibbs R.A."/>
            <person name="Loomis W.F."/>
            <person name="Platzer M."/>
            <person name="Kay R.R."/>
            <person name="Williams J.G."/>
            <person name="Dear P.H."/>
            <person name="Noegel A.A."/>
            <person name="Barrell B.G."/>
            <person name="Kuspa A."/>
        </authorList>
    </citation>
    <scope>NUCLEOTIDE SEQUENCE [LARGE SCALE GENOMIC DNA]</scope>
    <source>
        <strain>AX4</strain>
    </source>
</reference>
<sequence length="521" mass="58147">METETPMDVETKSTTSNTNDNNNNTTIVKTTSNIIKEGDHVILDINNGEKFSVIKVKLGSKVKIGKKQILINSIIGESYYSSFQVSNEKNTLERITQKEIDDRLNNLVELNQNDADNRNLDQNNTAQKLTQEDINEMKQKGTDSNTIIKTIVENSESFKTKTSFSQIKYLKKKIKKYSTIVKIIKPTLKSLTEAYYKKDSRKICGLRFDSFGQLLTLGNIRANSQVLVVETCMGLVTGSIAERMNGQGTILSAYIGKGPSLSIVNNFGFNTDVLNTIYPFNLNITSVLNKGEDISKLPPTASSGIYDKQVKEKEKEKEKDENVKDEKESGEEAKTIINQRNDTSNENIVKLLKDGGVWSLVIVTKYSPLNILLSCWPYLNSSGSFVIYSQFPQPLMEVHQFLHKNQMAVNQQISEIWMREHQVLPKRTHPMMGMDGASGFILYGTKVTKPIQKSTTTTTTTTTTTTNNSINPTKTTASLDIENKVIDATTSSSSSSTAAATTTEEDKEDSESALKKRKIDE</sequence>